<proteinExistence type="inferred from homology"/>
<organism>
    <name type="scientific">Salmonella gallinarum (strain 287/91 / NCTC 13346)</name>
    <dbReference type="NCBI Taxonomy" id="550538"/>
    <lineage>
        <taxon>Bacteria</taxon>
        <taxon>Pseudomonadati</taxon>
        <taxon>Pseudomonadota</taxon>
        <taxon>Gammaproteobacteria</taxon>
        <taxon>Enterobacterales</taxon>
        <taxon>Enterobacteriaceae</taxon>
        <taxon>Salmonella</taxon>
    </lineage>
</organism>
<name>YICR_SALG2</name>
<keyword id="KW-0378">Hydrolase</keyword>
<keyword id="KW-0479">Metal-binding</keyword>
<keyword id="KW-0482">Metalloprotease</keyword>
<keyword id="KW-0645">Protease</keyword>
<keyword id="KW-0862">Zinc</keyword>
<comment type="similarity">
    <text evidence="1">Belongs to the UPF0758 family. YicR subfamily.</text>
</comment>
<reference key="1">
    <citation type="journal article" date="2008" name="Genome Res.">
        <title>Comparative genome analysis of Salmonella enteritidis PT4 and Salmonella gallinarum 287/91 provides insights into evolutionary and host adaptation pathways.</title>
        <authorList>
            <person name="Thomson N.R."/>
            <person name="Clayton D.J."/>
            <person name="Windhorst D."/>
            <person name="Vernikos G."/>
            <person name="Davidson S."/>
            <person name="Churcher C."/>
            <person name="Quail M.A."/>
            <person name="Stevens M."/>
            <person name="Jones M.A."/>
            <person name="Watson M."/>
            <person name="Barron A."/>
            <person name="Layton A."/>
            <person name="Pickard D."/>
            <person name="Kingsley R.A."/>
            <person name="Bignell A."/>
            <person name="Clark L."/>
            <person name="Harris B."/>
            <person name="Ormond D."/>
            <person name="Abdellah Z."/>
            <person name="Brooks K."/>
            <person name="Cherevach I."/>
            <person name="Chillingworth T."/>
            <person name="Woodward J."/>
            <person name="Norberczak H."/>
            <person name="Lord A."/>
            <person name="Arrowsmith C."/>
            <person name="Jagels K."/>
            <person name="Moule S."/>
            <person name="Mungall K."/>
            <person name="Saunders M."/>
            <person name="Whitehead S."/>
            <person name="Chabalgoity J.A."/>
            <person name="Maskell D."/>
            <person name="Humphreys T."/>
            <person name="Roberts M."/>
            <person name="Barrow P.A."/>
            <person name="Dougan G."/>
            <person name="Parkhill J."/>
        </authorList>
    </citation>
    <scope>NUCLEOTIDE SEQUENCE [LARGE SCALE GENOMIC DNA]</scope>
    <source>
        <strain>287/91 / NCTC 13346</strain>
    </source>
</reference>
<gene>
    <name evidence="1" type="primary">yicR</name>
    <name type="ordered locus">SG3702</name>
</gene>
<feature type="chain" id="PRO_1000089840" description="UPF0758 protein YicR">
    <location>
        <begin position="1"/>
        <end position="221"/>
    </location>
</feature>
<feature type="domain" description="MPN" evidence="2">
    <location>
        <begin position="99"/>
        <end position="221"/>
    </location>
</feature>
<feature type="short sequence motif" description="JAMM motif" evidence="2">
    <location>
        <begin position="170"/>
        <end position="183"/>
    </location>
</feature>
<feature type="binding site" evidence="2">
    <location>
        <position position="170"/>
    </location>
    <ligand>
        <name>Zn(2+)</name>
        <dbReference type="ChEBI" id="CHEBI:29105"/>
        <note>catalytic</note>
    </ligand>
</feature>
<feature type="binding site" evidence="2">
    <location>
        <position position="172"/>
    </location>
    <ligand>
        <name>Zn(2+)</name>
        <dbReference type="ChEBI" id="CHEBI:29105"/>
        <note>catalytic</note>
    </ligand>
</feature>
<feature type="binding site" evidence="2">
    <location>
        <position position="183"/>
    </location>
    <ligand>
        <name>Zn(2+)</name>
        <dbReference type="ChEBI" id="CHEBI:29105"/>
        <note>catalytic</note>
    </ligand>
</feature>
<dbReference type="EMBL" id="AM933173">
    <property type="protein sequence ID" value="CAR39482.1"/>
    <property type="molecule type" value="Genomic_DNA"/>
</dbReference>
<dbReference type="SMR" id="B5RGE9"/>
<dbReference type="KEGG" id="seg:SG3702"/>
<dbReference type="HOGENOM" id="CLU_073529_0_1_6"/>
<dbReference type="Proteomes" id="UP000008321">
    <property type="component" value="Chromosome"/>
</dbReference>
<dbReference type="GO" id="GO:0046872">
    <property type="term" value="F:metal ion binding"/>
    <property type="evidence" value="ECO:0007669"/>
    <property type="project" value="UniProtKB-KW"/>
</dbReference>
<dbReference type="GO" id="GO:0008237">
    <property type="term" value="F:metallopeptidase activity"/>
    <property type="evidence" value="ECO:0007669"/>
    <property type="project" value="UniProtKB-KW"/>
</dbReference>
<dbReference type="GO" id="GO:0006508">
    <property type="term" value="P:proteolysis"/>
    <property type="evidence" value="ECO:0007669"/>
    <property type="project" value="UniProtKB-KW"/>
</dbReference>
<dbReference type="CDD" id="cd08071">
    <property type="entry name" value="MPN_DUF2466"/>
    <property type="match status" value="1"/>
</dbReference>
<dbReference type="Gene3D" id="3.40.140.10">
    <property type="entry name" value="Cytidine Deaminase, domain 2"/>
    <property type="match status" value="1"/>
</dbReference>
<dbReference type="HAMAP" id="MF_00018">
    <property type="entry name" value="UPF0758_YicR"/>
    <property type="match status" value="1"/>
</dbReference>
<dbReference type="InterPro" id="IPR037518">
    <property type="entry name" value="MPN"/>
</dbReference>
<dbReference type="InterPro" id="IPR025657">
    <property type="entry name" value="RadC_JAB"/>
</dbReference>
<dbReference type="InterPro" id="IPR010994">
    <property type="entry name" value="RuvA_2-like"/>
</dbReference>
<dbReference type="InterPro" id="IPR001405">
    <property type="entry name" value="UPF0758"/>
</dbReference>
<dbReference type="InterPro" id="IPR020891">
    <property type="entry name" value="UPF0758_CS"/>
</dbReference>
<dbReference type="InterPro" id="IPR046778">
    <property type="entry name" value="UPF0758_N"/>
</dbReference>
<dbReference type="InterPro" id="IPR022820">
    <property type="entry name" value="UPF0758_YicR"/>
</dbReference>
<dbReference type="NCBIfam" id="NF000642">
    <property type="entry name" value="PRK00024.1"/>
    <property type="match status" value="1"/>
</dbReference>
<dbReference type="NCBIfam" id="TIGR00608">
    <property type="entry name" value="radc"/>
    <property type="match status" value="1"/>
</dbReference>
<dbReference type="PANTHER" id="PTHR30471">
    <property type="entry name" value="DNA REPAIR PROTEIN RADC"/>
    <property type="match status" value="1"/>
</dbReference>
<dbReference type="PANTHER" id="PTHR30471:SF3">
    <property type="entry name" value="UPF0758 PROTEIN YEES-RELATED"/>
    <property type="match status" value="1"/>
</dbReference>
<dbReference type="Pfam" id="PF04002">
    <property type="entry name" value="RadC"/>
    <property type="match status" value="1"/>
</dbReference>
<dbReference type="Pfam" id="PF20582">
    <property type="entry name" value="UPF0758_N"/>
    <property type="match status" value="1"/>
</dbReference>
<dbReference type="SUPFAM" id="SSF47781">
    <property type="entry name" value="RuvA domain 2-like"/>
    <property type="match status" value="1"/>
</dbReference>
<dbReference type="PROSITE" id="PS50249">
    <property type="entry name" value="MPN"/>
    <property type="match status" value="1"/>
</dbReference>
<dbReference type="PROSITE" id="PS01302">
    <property type="entry name" value="UPF0758"/>
    <property type="match status" value="1"/>
</dbReference>
<protein>
    <recommendedName>
        <fullName evidence="1">UPF0758 protein YicR</fullName>
    </recommendedName>
</protein>
<sequence>MDTLDELLPREKMLRSGIASLSDVELLALFLRTGTPGKDVMTLAKEILQHFGSLYGLLSADFAQFRGVNGIGLAKFAQLKGIAELARRYYSVRMNEESALLSPEMTREFLQSQLTGEEREIFLVIFLDAQHRVLQHSRLFSGTLNHVEVHPREIVREAIKLNASAVILAHNHPSGCAEPSKADKLITERVIKCCQFMDIRVLDHLIIGRGEYVSFAERGWI</sequence>
<accession>B5RGE9</accession>
<evidence type="ECO:0000255" key="1">
    <source>
        <dbReference type="HAMAP-Rule" id="MF_00018"/>
    </source>
</evidence>
<evidence type="ECO:0000255" key="2">
    <source>
        <dbReference type="PROSITE-ProRule" id="PRU01182"/>
    </source>
</evidence>